<dbReference type="EMBL" id="AK050648">
    <property type="protein sequence ID" value="BAC34362.1"/>
    <property type="molecule type" value="mRNA"/>
</dbReference>
<dbReference type="EMBL" id="AL671759">
    <property type="status" value="NOT_ANNOTATED_CDS"/>
    <property type="molecule type" value="Genomic_DNA"/>
</dbReference>
<dbReference type="EMBL" id="BC024696">
    <property type="protein sequence ID" value="AAH24696.1"/>
    <property type="molecule type" value="mRNA"/>
</dbReference>
<dbReference type="CCDS" id="CCDS18699.1"/>
<dbReference type="RefSeq" id="NP_084024.1">
    <property type="nucleotide sequence ID" value="NM_029748.3"/>
</dbReference>
<dbReference type="FunCoup" id="Q8R1E7">
    <property type="interactions" value="34"/>
</dbReference>
<dbReference type="STRING" id="10090.ENSMUSP00000099651"/>
<dbReference type="PaxDb" id="10090-ENSMUSP00000099651"/>
<dbReference type="ProteomicsDB" id="260689"/>
<dbReference type="DNASU" id="76799"/>
<dbReference type="Ensembl" id="ENSMUST00000102591.10">
    <property type="protein sequence ID" value="ENSMUSP00000099651.4"/>
    <property type="gene ID" value="ENSMUSG00000028797.21"/>
</dbReference>
<dbReference type="GeneID" id="76799"/>
<dbReference type="KEGG" id="mmu:76799"/>
<dbReference type="UCSC" id="uc008uxo.1">
    <property type="organism name" value="mouse"/>
</dbReference>
<dbReference type="AGR" id="MGI:1924049"/>
<dbReference type="CTD" id="56063"/>
<dbReference type="MGI" id="MGI:1924049">
    <property type="gene designation" value="Tmem234"/>
</dbReference>
<dbReference type="VEuPathDB" id="HostDB:ENSMUSG00000028797"/>
<dbReference type="eggNOG" id="KOG4831">
    <property type="taxonomic scope" value="Eukaryota"/>
</dbReference>
<dbReference type="GeneTree" id="ENSGT00940000162781"/>
<dbReference type="InParanoid" id="Q8R1E7"/>
<dbReference type="OMA" id="LGEWYAE"/>
<dbReference type="OrthoDB" id="43458at2759"/>
<dbReference type="PhylomeDB" id="Q8R1E7"/>
<dbReference type="TreeFam" id="TF300180"/>
<dbReference type="BioGRID-ORCS" id="76799">
    <property type="hits" value="3 hits in 77 CRISPR screens"/>
</dbReference>
<dbReference type="ChiTaRS" id="Tmem234">
    <property type="organism name" value="mouse"/>
</dbReference>
<dbReference type="PRO" id="PR:Q8R1E7"/>
<dbReference type="Proteomes" id="UP000000589">
    <property type="component" value="Chromosome 4"/>
</dbReference>
<dbReference type="RNAct" id="Q8R1E7">
    <property type="molecule type" value="protein"/>
</dbReference>
<dbReference type="Bgee" id="ENSMUSG00000028797">
    <property type="expression patterns" value="Expressed in prostate gland ventral lobe and 266 other cell types or tissues"/>
</dbReference>
<dbReference type="ExpressionAtlas" id="Q8R1E7">
    <property type="expression patterns" value="baseline and differential"/>
</dbReference>
<dbReference type="GO" id="GO:0016020">
    <property type="term" value="C:membrane"/>
    <property type="evidence" value="ECO:0007669"/>
    <property type="project" value="UniProtKB-SubCell"/>
</dbReference>
<dbReference type="InterPro" id="IPR018908">
    <property type="entry name" value="TMEM234"/>
</dbReference>
<dbReference type="PANTHER" id="PTHR28668">
    <property type="entry name" value="TRANSMEMBRANE PROTEIN 234"/>
    <property type="match status" value="1"/>
</dbReference>
<dbReference type="PANTHER" id="PTHR28668:SF1">
    <property type="entry name" value="TRANSMEMBRANE PROTEIN 234"/>
    <property type="match status" value="1"/>
</dbReference>
<dbReference type="Pfam" id="PF10639">
    <property type="entry name" value="TMEM234"/>
    <property type="match status" value="1"/>
</dbReference>
<dbReference type="SUPFAM" id="SSF103481">
    <property type="entry name" value="Multidrug resistance efflux transporter EmrE"/>
    <property type="match status" value="1"/>
</dbReference>
<comment type="subcellular location">
    <subcellularLocation>
        <location evidence="2">Membrane</location>
        <topology evidence="2">Multi-pass membrane protein</topology>
    </subcellularLocation>
</comment>
<comment type="similarity">
    <text evidence="2">Belongs to the TMEM234 family.</text>
</comment>
<accession>Q8R1E7</accession>
<evidence type="ECO:0000255" key="1"/>
<evidence type="ECO:0000305" key="2"/>
<protein>
    <recommendedName>
        <fullName>Transmembrane protein 234</fullName>
    </recommendedName>
</protein>
<keyword id="KW-0472">Membrane</keyword>
<keyword id="KW-1185">Reference proteome</keyword>
<keyword id="KW-0812">Transmembrane</keyword>
<keyword id="KW-1133">Transmembrane helix</keyword>
<name>TM234_MOUSE</name>
<sequence length="140" mass="14922">MAASWGQVLALVLVAALWGGTQPLLKRASSGLEQVRERTWAWQLLQEIKALFGNTEYLMPFLLNQSGSLLYYLTLASTDLTLAVPICNSLAIVFTLIVGKVLGEDIGGKEAVAGMVLTITGITVCITSSVSKTQGQPSHS</sequence>
<gene>
    <name type="primary">Tmem234</name>
</gene>
<feature type="chain" id="PRO_0000326485" description="Transmembrane protein 234">
    <location>
        <begin position="1"/>
        <end position="140"/>
    </location>
</feature>
<feature type="transmembrane region" description="Helical" evidence="1">
    <location>
        <begin position="1"/>
        <end position="21"/>
    </location>
</feature>
<feature type="transmembrane region" description="Helical" evidence="1">
    <location>
        <begin position="82"/>
        <end position="102"/>
    </location>
</feature>
<feature type="transmembrane region" description="Helical" evidence="1">
    <location>
        <begin position="111"/>
        <end position="131"/>
    </location>
</feature>
<organism>
    <name type="scientific">Mus musculus</name>
    <name type="common">Mouse</name>
    <dbReference type="NCBI Taxonomy" id="10090"/>
    <lineage>
        <taxon>Eukaryota</taxon>
        <taxon>Metazoa</taxon>
        <taxon>Chordata</taxon>
        <taxon>Craniata</taxon>
        <taxon>Vertebrata</taxon>
        <taxon>Euteleostomi</taxon>
        <taxon>Mammalia</taxon>
        <taxon>Eutheria</taxon>
        <taxon>Euarchontoglires</taxon>
        <taxon>Glires</taxon>
        <taxon>Rodentia</taxon>
        <taxon>Myomorpha</taxon>
        <taxon>Muroidea</taxon>
        <taxon>Muridae</taxon>
        <taxon>Murinae</taxon>
        <taxon>Mus</taxon>
        <taxon>Mus</taxon>
    </lineage>
</organism>
<reference key="1">
    <citation type="journal article" date="2005" name="Science">
        <title>The transcriptional landscape of the mammalian genome.</title>
        <authorList>
            <person name="Carninci P."/>
            <person name="Kasukawa T."/>
            <person name="Katayama S."/>
            <person name="Gough J."/>
            <person name="Frith M.C."/>
            <person name="Maeda N."/>
            <person name="Oyama R."/>
            <person name="Ravasi T."/>
            <person name="Lenhard B."/>
            <person name="Wells C."/>
            <person name="Kodzius R."/>
            <person name="Shimokawa K."/>
            <person name="Bajic V.B."/>
            <person name="Brenner S.E."/>
            <person name="Batalov S."/>
            <person name="Forrest A.R."/>
            <person name="Zavolan M."/>
            <person name="Davis M.J."/>
            <person name="Wilming L.G."/>
            <person name="Aidinis V."/>
            <person name="Allen J.E."/>
            <person name="Ambesi-Impiombato A."/>
            <person name="Apweiler R."/>
            <person name="Aturaliya R.N."/>
            <person name="Bailey T.L."/>
            <person name="Bansal M."/>
            <person name="Baxter L."/>
            <person name="Beisel K.W."/>
            <person name="Bersano T."/>
            <person name="Bono H."/>
            <person name="Chalk A.M."/>
            <person name="Chiu K.P."/>
            <person name="Choudhary V."/>
            <person name="Christoffels A."/>
            <person name="Clutterbuck D.R."/>
            <person name="Crowe M.L."/>
            <person name="Dalla E."/>
            <person name="Dalrymple B.P."/>
            <person name="de Bono B."/>
            <person name="Della Gatta G."/>
            <person name="di Bernardo D."/>
            <person name="Down T."/>
            <person name="Engstrom P."/>
            <person name="Fagiolini M."/>
            <person name="Faulkner G."/>
            <person name="Fletcher C.F."/>
            <person name="Fukushima T."/>
            <person name="Furuno M."/>
            <person name="Futaki S."/>
            <person name="Gariboldi M."/>
            <person name="Georgii-Hemming P."/>
            <person name="Gingeras T.R."/>
            <person name="Gojobori T."/>
            <person name="Green R.E."/>
            <person name="Gustincich S."/>
            <person name="Harbers M."/>
            <person name="Hayashi Y."/>
            <person name="Hensch T.K."/>
            <person name="Hirokawa N."/>
            <person name="Hill D."/>
            <person name="Huminiecki L."/>
            <person name="Iacono M."/>
            <person name="Ikeo K."/>
            <person name="Iwama A."/>
            <person name="Ishikawa T."/>
            <person name="Jakt M."/>
            <person name="Kanapin A."/>
            <person name="Katoh M."/>
            <person name="Kawasawa Y."/>
            <person name="Kelso J."/>
            <person name="Kitamura H."/>
            <person name="Kitano H."/>
            <person name="Kollias G."/>
            <person name="Krishnan S.P."/>
            <person name="Kruger A."/>
            <person name="Kummerfeld S.K."/>
            <person name="Kurochkin I.V."/>
            <person name="Lareau L.F."/>
            <person name="Lazarevic D."/>
            <person name="Lipovich L."/>
            <person name="Liu J."/>
            <person name="Liuni S."/>
            <person name="McWilliam S."/>
            <person name="Madan Babu M."/>
            <person name="Madera M."/>
            <person name="Marchionni L."/>
            <person name="Matsuda H."/>
            <person name="Matsuzawa S."/>
            <person name="Miki H."/>
            <person name="Mignone F."/>
            <person name="Miyake S."/>
            <person name="Morris K."/>
            <person name="Mottagui-Tabar S."/>
            <person name="Mulder N."/>
            <person name="Nakano N."/>
            <person name="Nakauchi H."/>
            <person name="Ng P."/>
            <person name="Nilsson R."/>
            <person name="Nishiguchi S."/>
            <person name="Nishikawa S."/>
            <person name="Nori F."/>
            <person name="Ohara O."/>
            <person name="Okazaki Y."/>
            <person name="Orlando V."/>
            <person name="Pang K.C."/>
            <person name="Pavan W.J."/>
            <person name="Pavesi G."/>
            <person name="Pesole G."/>
            <person name="Petrovsky N."/>
            <person name="Piazza S."/>
            <person name="Reed J."/>
            <person name="Reid J.F."/>
            <person name="Ring B.Z."/>
            <person name="Ringwald M."/>
            <person name="Rost B."/>
            <person name="Ruan Y."/>
            <person name="Salzberg S.L."/>
            <person name="Sandelin A."/>
            <person name="Schneider C."/>
            <person name="Schoenbach C."/>
            <person name="Sekiguchi K."/>
            <person name="Semple C.A."/>
            <person name="Seno S."/>
            <person name="Sessa L."/>
            <person name="Sheng Y."/>
            <person name="Shibata Y."/>
            <person name="Shimada H."/>
            <person name="Shimada K."/>
            <person name="Silva D."/>
            <person name="Sinclair B."/>
            <person name="Sperling S."/>
            <person name="Stupka E."/>
            <person name="Sugiura K."/>
            <person name="Sultana R."/>
            <person name="Takenaka Y."/>
            <person name="Taki K."/>
            <person name="Tammoja K."/>
            <person name="Tan S.L."/>
            <person name="Tang S."/>
            <person name="Taylor M.S."/>
            <person name="Tegner J."/>
            <person name="Teichmann S.A."/>
            <person name="Ueda H.R."/>
            <person name="van Nimwegen E."/>
            <person name="Verardo R."/>
            <person name="Wei C.L."/>
            <person name="Yagi K."/>
            <person name="Yamanishi H."/>
            <person name="Zabarovsky E."/>
            <person name="Zhu S."/>
            <person name="Zimmer A."/>
            <person name="Hide W."/>
            <person name="Bult C."/>
            <person name="Grimmond S.M."/>
            <person name="Teasdale R.D."/>
            <person name="Liu E.T."/>
            <person name="Brusic V."/>
            <person name="Quackenbush J."/>
            <person name="Wahlestedt C."/>
            <person name="Mattick J.S."/>
            <person name="Hume D.A."/>
            <person name="Kai C."/>
            <person name="Sasaki D."/>
            <person name="Tomaru Y."/>
            <person name="Fukuda S."/>
            <person name="Kanamori-Katayama M."/>
            <person name="Suzuki M."/>
            <person name="Aoki J."/>
            <person name="Arakawa T."/>
            <person name="Iida J."/>
            <person name="Imamura K."/>
            <person name="Itoh M."/>
            <person name="Kato T."/>
            <person name="Kawaji H."/>
            <person name="Kawagashira N."/>
            <person name="Kawashima T."/>
            <person name="Kojima M."/>
            <person name="Kondo S."/>
            <person name="Konno H."/>
            <person name="Nakano K."/>
            <person name="Ninomiya N."/>
            <person name="Nishio T."/>
            <person name="Okada M."/>
            <person name="Plessy C."/>
            <person name="Shibata K."/>
            <person name="Shiraki T."/>
            <person name="Suzuki S."/>
            <person name="Tagami M."/>
            <person name="Waki K."/>
            <person name="Watahiki A."/>
            <person name="Okamura-Oho Y."/>
            <person name="Suzuki H."/>
            <person name="Kawai J."/>
            <person name="Hayashizaki Y."/>
        </authorList>
    </citation>
    <scope>NUCLEOTIDE SEQUENCE [LARGE SCALE MRNA]</scope>
    <source>
        <strain>C57BL/6J</strain>
        <tissue>Thymus</tissue>
    </source>
</reference>
<reference key="2">
    <citation type="journal article" date="2009" name="PLoS Biol.">
        <title>Lineage-specific biology revealed by a finished genome assembly of the mouse.</title>
        <authorList>
            <person name="Church D.M."/>
            <person name="Goodstadt L."/>
            <person name="Hillier L.W."/>
            <person name="Zody M.C."/>
            <person name="Goldstein S."/>
            <person name="She X."/>
            <person name="Bult C.J."/>
            <person name="Agarwala R."/>
            <person name="Cherry J.L."/>
            <person name="DiCuccio M."/>
            <person name="Hlavina W."/>
            <person name="Kapustin Y."/>
            <person name="Meric P."/>
            <person name="Maglott D."/>
            <person name="Birtle Z."/>
            <person name="Marques A.C."/>
            <person name="Graves T."/>
            <person name="Zhou S."/>
            <person name="Teague B."/>
            <person name="Potamousis K."/>
            <person name="Churas C."/>
            <person name="Place M."/>
            <person name="Herschleb J."/>
            <person name="Runnheim R."/>
            <person name="Forrest D."/>
            <person name="Amos-Landgraf J."/>
            <person name="Schwartz D.C."/>
            <person name="Cheng Z."/>
            <person name="Lindblad-Toh K."/>
            <person name="Eichler E.E."/>
            <person name="Ponting C.P."/>
        </authorList>
    </citation>
    <scope>NUCLEOTIDE SEQUENCE [LARGE SCALE GENOMIC DNA]</scope>
    <source>
        <strain>C57BL/6J</strain>
    </source>
</reference>
<reference key="3">
    <citation type="journal article" date="2004" name="Genome Res.">
        <title>The status, quality, and expansion of the NIH full-length cDNA project: the Mammalian Gene Collection (MGC).</title>
        <authorList>
            <consortium name="The MGC Project Team"/>
        </authorList>
    </citation>
    <scope>NUCLEOTIDE SEQUENCE [LARGE SCALE MRNA]</scope>
    <source>
        <strain>FVB/N</strain>
        <tissue>Salivary gland</tissue>
    </source>
</reference>
<reference key="4">
    <citation type="journal article" date="2010" name="Cell">
        <title>A tissue-specific atlas of mouse protein phosphorylation and expression.</title>
        <authorList>
            <person name="Huttlin E.L."/>
            <person name="Jedrychowski M.P."/>
            <person name="Elias J.E."/>
            <person name="Goswami T."/>
            <person name="Rad R."/>
            <person name="Beausoleil S.A."/>
            <person name="Villen J."/>
            <person name="Haas W."/>
            <person name="Sowa M.E."/>
            <person name="Gygi S.P."/>
        </authorList>
    </citation>
    <scope>IDENTIFICATION BY MASS SPECTROMETRY [LARGE SCALE ANALYSIS]</scope>
    <source>
        <tissue>Pancreas</tissue>
        <tissue>Testis</tissue>
    </source>
</reference>
<proteinExistence type="evidence at protein level"/>